<comment type="function">
    <text>May be involved in transcriptional regulation.</text>
</comment>
<comment type="subcellular location">
    <subcellularLocation>
        <location evidence="3">Nucleus</location>
    </subcellularLocation>
</comment>
<comment type="similarity">
    <text evidence="5">Belongs to the krueppel C2H2-type zinc-finger protein family.</text>
</comment>
<accession>Q642B9</accession>
<sequence length="556" mass="62947">MPVNLGQALGLLPFLAKAEDATFSGSDVIQQRELANPETARQLFRQFRYQVMSGPQETLRQLRKLCFQWLRPEVHTKEQILEILMLEQFLTILPGEIQMWVRKQCPGSGEEAVTLVESLKGDPQKLWQWISIQVLGQEIPFEKENSARCRGDKVEPALEAEPTVEVVPQDLPLQNTSSAPGELLSHGVKEESDLEPELALAASQLPARPEERPTRDQEVGTALLPSLQEEQWRHLDSTQKEQYWDLMLETYGKMVSGVAGISNSKPDLTNMAEYGEELVGLHLHSAEKMARAPCKEDRQENDKENLNLENHRDQGCLDVFDQAPGEAPPQTALSDFFGESEPHHFGGESVPEALENLQGEGTGAHLFPHERGSGKQLGQHIQSSSSGELSALWLEEKREASQKGQARAPMAQKLPTCRECGKTFYRNSQLVFHQRTHTGETYFHCRICKKAFLRSSDFVKHQRTHTGEKPCKCDYCGKGFSDFSGLRHHEKIHTGEKPYKCPICEKSFIQRSNFNRHQRVHTGEKPYKCTHCGKRFSWSSSLDKHQRSHLGKKPCP</sequence>
<organism>
    <name type="scientific">Rattus norvegicus</name>
    <name type="common">Rat</name>
    <dbReference type="NCBI Taxonomy" id="10116"/>
    <lineage>
        <taxon>Eukaryota</taxon>
        <taxon>Metazoa</taxon>
        <taxon>Chordata</taxon>
        <taxon>Craniata</taxon>
        <taxon>Vertebrata</taxon>
        <taxon>Euteleostomi</taxon>
        <taxon>Mammalia</taxon>
        <taxon>Eutheria</taxon>
        <taxon>Euarchontoglires</taxon>
        <taxon>Glires</taxon>
        <taxon>Rodentia</taxon>
        <taxon>Myomorpha</taxon>
        <taxon>Muroidea</taxon>
        <taxon>Muridae</taxon>
        <taxon>Murinae</taxon>
        <taxon>Rattus</taxon>
    </lineage>
</organism>
<protein>
    <recommendedName>
        <fullName>Zinc finger protein 18</fullName>
    </recommendedName>
    <alternativeName>
        <fullName>Zinc finger protein 535</fullName>
    </alternativeName>
</protein>
<name>ZNF18_RAT</name>
<dbReference type="EMBL" id="BC081874">
    <property type="protein sequence ID" value="AAH81874.1"/>
    <property type="molecule type" value="mRNA"/>
</dbReference>
<dbReference type="RefSeq" id="NP_001012008.1">
    <property type="nucleotide sequence ID" value="NM_001012008.1"/>
</dbReference>
<dbReference type="RefSeq" id="XP_006246757.1">
    <property type="nucleotide sequence ID" value="XM_006246695.3"/>
</dbReference>
<dbReference type="SMR" id="Q642B9"/>
<dbReference type="FunCoup" id="Q642B9">
    <property type="interactions" value="654"/>
</dbReference>
<dbReference type="STRING" id="10116.ENSRNOP00000005518"/>
<dbReference type="PhosphoSitePlus" id="Q642B9"/>
<dbReference type="PaxDb" id="10116-ENSRNOP00000005518"/>
<dbReference type="GeneID" id="303226"/>
<dbReference type="KEGG" id="rno:303226"/>
<dbReference type="UCSC" id="RGD:1305130">
    <property type="organism name" value="rat"/>
</dbReference>
<dbReference type="AGR" id="RGD:1305130"/>
<dbReference type="CTD" id="303226"/>
<dbReference type="RGD" id="1305130">
    <property type="gene designation" value="Zfp18"/>
</dbReference>
<dbReference type="VEuPathDB" id="HostDB:ENSRNOG00000003981"/>
<dbReference type="eggNOG" id="KOG1721">
    <property type="taxonomic scope" value="Eukaryota"/>
</dbReference>
<dbReference type="HOGENOM" id="CLU_002678_49_10_1"/>
<dbReference type="InParanoid" id="Q642B9"/>
<dbReference type="OrthoDB" id="6077919at2759"/>
<dbReference type="PhylomeDB" id="Q642B9"/>
<dbReference type="TreeFam" id="TF337489"/>
<dbReference type="Reactome" id="R-RNO-212436">
    <property type="pathway name" value="Generic Transcription Pathway"/>
</dbReference>
<dbReference type="PRO" id="PR:Q642B9"/>
<dbReference type="Proteomes" id="UP000002494">
    <property type="component" value="Chromosome 10"/>
</dbReference>
<dbReference type="Bgee" id="ENSRNOG00000003981">
    <property type="expression patterns" value="Expressed in thymus and 19 other cell types or tissues"/>
</dbReference>
<dbReference type="GO" id="GO:0005634">
    <property type="term" value="C:nucleus"/>
    <property type="evidence" value="ECO:0007669"/>
    <property type="project" value="UniProtKB-SubCell"/>
</dbReference>
<dbReference type="GO" id="GO:0000981">
    <property type="term" value="F:DNA-binding transcription factor activity, RNA polymerase II-specific"/>
    <property type="evidence" value="ECO:0000318"/>
    <property type="project" value="GO_Central"/>
</dbReference>
<dbReference type="GO" id="GO:0000978">
    <property type="term" value="F:RNA polymerase II cis-regulatory region sequence-specific DNA binding"/>
    <property type="evidence" value="ECO:0000318"/>
    <property type="project" value="GO_Central"/>
</dbReference>
<dbReference type="GO" id="GO:0008270">
    <property type="term" value="F:zinc ion binding"/>
    <property type="evidence" value="ECO:0007669"/>
    <property type="project" value="UniProtKB-KW"/>
</dbReference>
<dbReference type="GO" id="GO:0006357">
    <property type="term" value="P:regulation of transcription by RNA polymerase II"/>
    <property type="evidence" value="ECO:0000318"/>
    <property type="project" value="GO_Central"/>
</dbReference>
<dbReference type="CDD" id="cd07765">
    <property type="entry name" value="KRAB_A-box"/>
    <property type="match status" value="1"/>
</dbReference>
<dbReference type="CDD" id="cd07936">
    <property type="entry name" value="SCAN"/>
    <property type="match status" value="1"/>
</dbReference>
<dbReference type="FunFam" id="3.30.160.60:FF:001183">
    <property type="entry name" value="Zinc finger protein 18"/>
    <property type="match status" value="1"/>
</dbReference>
<dbReference type="FunFam" id="3.30.160.60:FF:001193">
    <property type="entry name" value="Zinc finger protein 18"/>
    <property type="match status" value="1"/>
</dbReference>
<dbReference type="FunFam" id="3.30.160.60:FF:000720">
    <property type="entry name" value="zinc finger protein 18 isoform X2"/>
    <property type="match status" value="1"/>
</dbReference>
<dbReference type="FunFam" id="1.10.4020.10:FF:000001">
    <property type="entry name" value="zinc finger protein 263 isoform X1"/>
    <property type="match status" value="1"/>
</dbReference>
<dbReference type="FunFam" id="3.30.160.60:FF:002343">
    <property type="entry name" value="Zinc finger protein 33A"/>
    <property type="match status" value="1"/>
</dbReference>
<dbReference type="FunFam" id="3.30.160.60:FF:000212">
    <property type="entry name" value="zinc finger protein 382 isoform X2"/>
    <property type="match status" value="1"/>
</dbReference>
<dbReference type="Gene3D" id="6.10.140.140">
    <property type="match status" value="1"/>
</dbReference>
<dbReference type="Gene3D" id="3.30.160.60">
    <property type="entry name" value="Classic Zinc Finger"/>
    <property type="match status" value="5"/>
</dbReference>
<dbReference type="Gene3D" id="1.10.4020.10">
    <property type="entry name" value="DNA breaking-rejoining enzymes"/>
    <property type="match status" value="1"/>
</dbReference>
<dbReference type="InterPro" id="IPR001909">
    <property type="entry name" value="KRAB"/>
</dbReference>
<dbReference type="InterPro" id="IPR036051">
    <property type="entry name" value="KRAB_dom_sf"/>
</dbReference>
<dbReference type="InterPro" id="IPR003309">
    <property type="entry name" value="SCAN_dom"/>
</dbReference>
<dbReference type="InterPro" id="IPR038269">
    <property type="entry name" value="SCAN_sf"/>
</dbReference>
<dbReference type="InterPro" id="IPR036236">
    <property type="entry name" value="Znf_C2H2_sf"/>
</dbReference>
<dbReference type="InterPro" id="IPR013087">
    <property type="entry name" value="Znf_C2H2_type"/>
</dbReference>
<dbReference type="PANTHER" id="PTHR23226">
    <property type="entry name" value="ZINC FINGER AND SCAN DOMAIN-CONTAINING"/>
    <property type="match status" value="1"/>
</dbReference>
<dbReference type="PANTHER" id="PTHR23226:SF190">
    <property type="entry name" value="ZINC FINGER PROTEIN 18"/>
    <property type="match status" value="1"/>
</dbReference>
<dbReference type="Pfam" id="PF01352">
    <property type="entry name" value="KRAB"/>
    <property type="match status" value="1"/>
</dbReference>
<dbReference type="Pfam" id="PF02023">
    <property type="entry name" value="SCAN"/>
    <property type="match status" value="1"/>
</dbReference>
<dbReference type="Pfam" id="PF00096">
    <property type="entry name" value="zf-C2H2"/>
    <property type="match status" value="4"/>
</dbReference>
<dbReference type="SMART" id="SM00349">
    <property type="entry name" value="KRAB"/>
    <property type="match status" value="1"/>
</dbReference>
<dbReference type="SMART" id="SM00431">
    <property type="entry name" value="SCAN"/>
    <property type="match status" value="1"/>
</dbReference>
<dbReference type="SMART" id="SM00355">
    <property type="entry name" value="ZnF_C2H2"/>
    <property type="match status" value="5"/>
</dbReference>
<dbReference type="SUPFAM" id="SSF57667">
    <property type="entry name" value="beta-beta-alpha zinc fingers"/>
    <property type="match status" value="3"/>
</dbReference>
<dbReference type="SUPFAM" id="SSF109640">
    <property type="entry name" value="KRAB domain (Kruppel-associated box)"/>
    <property type="match status" value="1"/>
</dbReference>
<dbReference type="SUPFAM" id="SSF47353">
    <property type="entry name" value="Retrovirus capsid dimerization domain-like"/>
    <property type="match status" value="1"/>
</dbReference>
<dbReference type="PROSITE" id="PS50805">
    <property type="entry name" value="KRAB"/>
    <property type="match status" value="1"/>
</dbReference>
<dbReference type="PROSITE" id="PS50804">
    <property type="entry name" value="SCAN_BOX"/>
    <property type="match status" value="1"/>
</dbReference>
<dbReference type="PROSITE" id="PS00028">
    <property type="entry name" value="ZINC_FINGER_C2H2_1"/>
    <property type="match status" value="5"/>
</dbReference>
<dbReference type="PROSITE" id="PS50157">
    <property type="entry name" value="ZINC_FINGER_C2H2_2"/>
    <property type="match status" value="5"/>
</dbReference>
<gene>
    <name type="primary">Znf18</name>
    <name type="synonym">Zfp18</name>
    <name type="synonym">Zfp535</name>
</gene>
<feature type="chain" id="PRO_0000047342" description="Zinc finger protein 18">
    <location>
        <begin position="1"/>
        <end position="556"/>
    </location>
</feature>
<feature type="domain" description="SCAN box" evidence="3">
    <location>
        <begin position="41"/>
        <end position="123"/>
    </location>
</feature>
<feature type="domain" description="KRAB" evidence="2">
    <location>
        <begin position="218"/>
        <end position="291"/>
    </location>
</feature>
<feature type="zinc finger region" description="C2H2-type 1" evidence="1">
    <location>
        <begin position="415"/>
        <end position="437"/>
    </location>
</feature>
<feature type="zinc finger region" description="C2H2-type 2" evidence="1">
    <location>
        <begin position="443"/>
        <end position="465"/>
    </location>
</feature>
<feature type="zinc finger region" description="C2H2-type 3" evidence="1">
    <location>
        <begin position="471"/>
        <end position="493"/>
    </location>
</feature>
<feature type="zinc finger region" description="C2H2-type 4" evidence="1">
    <location>
        <begin position="499"/>
        <end position="521"/>
    </location>
</feature>
<feature type="zinc finger region" description="C2H2-type 5" evidence="1">
    <location>
        <begin position="527"/>
        <end position="549"/>
    </location>
</feature>
<feature type="region of interest" description="Disordered" evidence="4">
    <location>
        <begin position="169"/>
        <end position="195"/>
    </location>
</feature>
<proteinExistence type="evidence at transcript level"/>
<evidence type="ECO:0000255" key="1">
    <source>
        <dbReference type="PROSITE-ProRule" id="PRU00042"/>
    </source>
</evidence>
<evidence type="ECO:0000255" key="2">
    <source>
        <dbReference type="PROSITE-ProRule" id="PRU00119"/>
    </source>
</evidence>
<evidence type="ECO:0000255" key="3">
    <source>
        <dbReference type="PROSITE-ProRule" id="PRU00187"/>
    </source>
</evidence>
<evidence type="ECO:0000256" key="4">
    <source>
        <dbReference type="SAM" id="MobiDB-lite"/>
    </source>
</evidence>
<evidence type="ECO:0000305" key="5"/>
<reference key="1">
    <citation type="journal article" date="2004" name="Genome Res.">
        <title>The status, quality, and expansion of the NIH full-length cDNA project: the Mammalian Gene Collection (MGC).</title>
        <authorList>
            <consortium name="The MGC Project Team"/>
        </authorList>
    </citation>
    <scope>NUCLEOTIDE SEQUENCE [LARGE SCALE MRNA]</scope>
    <source>
        <tissue>Kidney</tissue>
    </source>
</reference>
<keyword id="KW-0238">DNA-binding</keyword>
<keyword id="KW-0479">Metal-binding</keyword>
<keyword id="KW-0539">Nucleus</keyword>
<keyword id="KW-1185">Reference proteome</keyword>
<keyword id="KW-0677">Repeat</keyword>
<keyword id="KW-0804">Transcription</keyword>
<keyword id="KW-0805">Transcription regulation</keyword>
<keyword id="KW-0862">Zinc</keyword>
<keyword id="KW-0863">Zinc-finger</keyword>